<comment type="function">
    <text evidence="1">Provides the (R)-glutamate required for cell wall biosynthesis.</text>
</comment>
<comment type="catalytic activity">
    <reaction evidence="1">
        <text>L-glutamate = D-glutamate</text>
        <dbReference type="Rhea" id="RHEA:12813"/>
        <dbReference type="ChEBI" id="CHEBI:29985"/>
        <dbReference type="ChEBI" id="CHEBI:29986"/>
        <dbReference type="EC" id="5.1.1.3"/>
    </reaction>
</comment>
<comment type="pathway">
    <text evidence="1">Cell wall biogenesis; peptidoglycan biosynthesis.</text>
</comment>
<comment type="similarity">
    <text evidence="1">Belongs to the aspartate/glutamate racemases family.</text>
</comment>
<sequence length="266" mass="29698">MNKPIGVIDSGVGGLTVAKEIMRQLPNETIYYLGDIGRCPYGPRPGEQVKQYTVEIARKLMEFDIKMLVIACNTATAVALEYLQKTLSIPVIGVIEPGARTAIMTTRNQNVLVLGTEGTIKSEAYRTHIKRINPHVEVHGVACPGFVPLVEQMRYSDPTITSIVIHQTLKRWRNSESDTVILGCTHYPLLYKPIYDYFGGKKTVISSGLETAREVSALLTFSNEHASYTEHPDHRFFATGDPTHITNIIKEWLNLSVNVERISVND</sequence>
<organism>
    <name type="scientific">Staphylococcus aureus (strain USA300 / TCH1516)</name>
    <dbReference type="NCBI Taxonomy" id="451516"/>
    <lineage>
        <taxon>Bacteria</taxon>
        <taxon>Bacillati</taxon>
        <taxon>Bacillota</taxon>
        <taxon>Bacilli</taxon>
        <taxon>Bacillales</taxon>
        <taxon>Staphylococcaceae</taxon>
        <taxon>Staphylococcus</taxon>
    </lineage>
</organism>
<protein>
    <recommendedName>
        <fullName evidence="1">Glutamate racemase</fullName>
        <ecNumber evidence="1">5.1.1.3</ecNumber>
    </recommendedName>
</protein>
<feature type="chain" id="PRO_1000078578" description="Glutamate racemase">
    <location>
        <begin position="1"/>
        <end position="266"/>
    </location>
</feature>
<feature type="active site" description="Proton donor/acceptor" evidence="1">
    <location>
        <position position="72"/>
    </location>
</feature>
<feature type="active site" description="Proton donor/acceptor" evidence="1">
    <location>
        <position position="184"/>
    </location>
</feature>
<feature type="binding site" evidence="1">
    <location>
        <begin position="9"/>
        <end position="10"/>
    </location>
    <ligand>
        <name>substrate</name>
    </ligand>
</feature>
<feature type="binding site" evidence="1">
    <location>
        <begin position="41"/>
        <end position="42"/>
    </location>
    <ligand>
        <name>substrate</name>
    </ligand>
</feature>
<feature type="binding site" evidence="1">
    <location>
        <begin position="73"/>
        <end position="74"/>
    </location>
    <ligand>
        <name>substrate</name>
    </ligand>
</feature>
<feature type="binding site" evidence="1">
    <location>
        <begin position="185"/>
        <end position="186"/>
    </location>
    <ligand>
        <name>substrate</name>
    </ligand>
</feature>
<proteinExistence type="inferred from homology"/>
<gene>
    <name evidence="1" type="primary">murI</name>
    <name type="ordered locus">USA300HOU_1086</name>
</gene>
<dbReference type="EC" id="5.1.1.3" evidence="1"/>
<dbReference type="EMBL" id="CP000730">
    <property type="protein sequence ID" value="ABX29105.1"/>
    <property type="molecule type" value="Genomic_DNA"/>
</dbReference>
<dbReference type="SMR" id="A8Z1T2"/>
<dbReference type="KEGG" id="sax:USA300HOU_1086"/>
<dbReference type="HOGENOM" id="CLU_052344_0_2_9"/>
<dbReference type="UniPathway" id="UPA00219"/>
<dbReference type="GO" id="GO:0008881">
    <property type="term" value="F:glutamate racemase activity"/>
    <property type="evidence" value="ECO:0007669"/>
    <property type="project" value="UniProtKB-UniRule"/>
</dbReference>
<dbReference type="GO" id="GO:0071555">
    <property type="term" value="P:cell wall organization"/>
    <property type="evidence" value="ECO:0007669"/>
    <property type="project" value="UniProtKB-KW"/>
</dbReference>
<dbReference type="GO" id="GO:0009252">
    <property type="term" value="P:peptidoglycan biosynthetic process"/>
    <property type="evidence" value="ECO:0007669"/>
    <property type="project" value="UniProtKB-UniRule"/>
</dbReference>
<dbReference type="GO" id="GO:0008360">
    <property type="term" value="P:regulation of cell shape"/>
    <property type="evidence" value="ECO:0007669"/>
    <property type="project" value="UniProtKB-KW"/>
</dbReference>
<dbReference type="FunFam" id="3.40.50.1860:FF:000002">
    <property type="entry name" value="Glutamate racemase"/>
    <property type="match status" value="1"/>
</dbReference>
<dbReference type="Gene3D" id="3.40.50.1860">
    <property type="match status" value="2"/>
</dbReference>
<dbReference type="HAMAP" id="MF_00258">
    <property type="entry name" value="Glu_racemase"/>
    <property type="match status" value="1"/>
</dbReference>
<dbReference type="InterPro" id="IPR015942">
    <property type="entry name" value="Asp/Glu/hydantoin_racemase"/>
</dbReference>
<dbReference type="InterPro" id="IPR001920">
    <property type="entry name" value="Asp/Glu_race"/>
</dbReference>
<dbReference type="InterPro" id="IPR018187">
    <property type="entry name" value="Asp/Glu_racemase_AS_1"/>
</dbReference>
<dbReference type="InterPro" id="IPR033134">
    <property type="entry name" value="Asp/Glu_racemase_AS_2"/>
</dbReference>
<dbReference type="InterPro" id="IPR004391">
    <property type="entry name" value="Glu_race"/>
</dbReference>
<dbReference type="NCBIfam" id="TIGR00067">
    <property type="entry name" value="glut_race"/>
    <property type="match status" value="1"/>
</dbReference>
<dbReference type="NCBIfam" id="NF002035">
    <property type="entry name" value="PRK00865.1-3"/>
    <property type="match status" value="1"/>
</dbReference>
<dbReference type="PANTHER" id="PTHR21198">
    <property type="entry name" value="GLUTAMATE RACEMASE"/>
    <property type="match status" value="1"/>
</dbReference>
<dbReference type="PANTHER" id="PTHR21198:SF2">
    <property type="entry name" value="GLUTAMATE RACEMASE"/>
    <property type="match status" value="1"/>
</dbReference>
<dbReference type="Pfam" id="PF01177">
    <property type="entry name" value="Asp_Glu_race"/>
    <property type="match status" value="1"/>
</dbReference>
<dbReference type="SUPFAM" id="SSF53681">
    <property type="entry name" value="Aspartate/glutamate racemase"/>
    <property type="match status" value="2"/>
</dbReference>
<dbReference type="PROSITE" id="PS00923">
    <property type="entry name" value="ASP_GLU_RACEMASE_1"/>
    <property type="match status" value="1"/>
</dbReference>
<dbReference type="PROSITE" id="PS00924">
    <property type="entry name" value="ASP_GLU_RACEMASE_2"/>
    <property type="match status" value="1"/>
</dbReference>
<accession>A8Z1T2</accession>
<reference key="1">
    <citation type="journal article" date="2007" name="BMC Microbiol.">
        <title>Subtle genetic changes enhance virulence of methicillin resistant and sensitive Staphylococcus aureus.</title>
        <authorList>
            <person name="Highlander S.K."/>
            <person name="Hulten K.G."/>
            <person name="Qin X."/>
            <person name="Jiang H."/>
            <person name="Yerrapragada S."/>
            <person name="Mason E.O. Jr."/>
            <person name="Shang Y."/>
            <person name="Williams T.M."/>
            <person name="Fortunov R.M."/>
            <person name="Liu Y."/>
            <person name="Igboeli O."/>
            <person name="Petrosino J."/>
            <person name="Tirumalai M."/>
            <person name="Uzman A."/>
            <person name="Fox G.E."/>
            <person name="Cardenas A.M."/>
            <person name="Muzny D.M."/>
            <person name="Hemphill L."/>
            <person name="Ding Y."/>
            <person name="Dugan S."/>
            <person name="Blyth P.R."/>
            <person name="Buhay C.J."/>
            <person name="Dinh H.H."/>
            <person name="Hawes A.C."/>
            <person name="Holder M."/>
            <person name="Kovar C.L."/>
            <person name="Lee S.L."/>
            <person name="Liu W."/>
            <person name="Nazareth L.V."/>
            <person name="Wang Q."/>
            <person name="Zhou J."/>
            <person name="Kaplan S.L."/>
            <person name="Weinstock G.M."/>
        </authorList>
    </citation>
    <scope>NUCLEOTIDE SEQUENCE [LARGE SCALE GENOMIC DNA]</scope>
    <source>
        <strain>USA300 / TCH1516</strain>
    </source>
</reference>
<name>MURI_STAAT</name>
<keyword id="KW-0133">Cell shape</keyword>
<keyword id="KW-0961">Cell wall biogenesis/degradation</keyword>
<keyword id="KW-0413">Isomerase</keyword>
<keyword id="KW-0573">Peptidoglycan synthesis</keyword>
<evidence type="ECO:0000255" key="1">
    <source>
        <dbReference type="HAMAP-Rule" id="MF_00258"/>
    </source>
</evidence>